<dbReference type="EMBL" id="AE017220">
    <property type="protein sequence ID" value="AAX64044.1"/>
    <property type="molecule type" value="Genomic_DNA"/>
</dbReference>
<dbReference type="RefSeq" id="WP_000557443.1">
    <property type="nucleotide sequence ID" value="NC_006905.1"/>
</dbReference>
<dbReference type="SMR" id="Q57TB7"/>
<dbReference type="KEGG" id="sec:SCH_0138"/>
<dbReference type="HOGENOM" id="CLU_076303_0_0_6"/>
<dbReference type="Proteomes" id="UP000000538">
    <property type="component" value="Chromosome"/>
</dbReference>
<dbReference type="GO" id="GO:0032153">
    <property type="term" value="C:cell division site"/>
    <property type="evidence" value="ECO:0007669"/>
    <property type="project" value="TreeGrafter"/>
</dbReference>
<dbReference type="GO" id="GO:0005737">
    <property type="term" value="C:cytoplasm"/>
    <property type="evidence" value="ECO:0007669"/>
    <property type="project" value="UniProtKB-SubCell"/>
</dbReference>
<dbReference type="GO" id="GO:0000917">
    <property type="term" value="P:division septum assembly"/>
    <property type="evidence" value="ECO:0007669"/>
    <property type="project" value="UniProtKB-KW"/>
</dbReference>
<dbReference type="GO" id="GO:0043093">
    <property type="term" value="P:FtsZ-dependent cytokinesis"/>
    <property type="evidence" value="ECO:0007669"/>
    <property type="project" value="UniProtKB-UniRule"/>
</dbReference>
<dbReference type="FunFam" id="1.10.3900.10:FF:000001">
    <property type="entry name" value="Cell division protein ZapD"/>
    <property type="match status" value="1"/>
</dbReference>
<dbReference type="FunFam" id="2.60.440.10:FF:000001">
    <property type="entry name" value="Cell division protein ZapD"/>
    <property type="match status" value="1"/>
</dbReference>
<dbReference type="Gene3D" id="1.10.3900.10">
    <property type="entry name" value="YacF-like"/>
    <property type="match status" value="1"/>
</dbReference>
<dbReference type="Gene3D" id="2.60.440.10">
    <property type="entry name" value="YacF-like domains"/>
    <property type="match status" value="1"/>
</dbReference>
<dbReference type="HAMAP" id="MF_01092">
    <property type="entry name" value="ZapD"/>
    <property type="match status" value="1"/>
</dbReference>
<dbReference type="InterPro" id="IPR009777">
    <property type="entry name" value="ZapD"/>
</dbReference>
<dbReference type="InterPro" id="IPR027462">
    <property type="entry name" value="ZapD_C"/>
</dbReference>
<dbReference type="InterPro" id="IPR036268">
    <property type="entry name" value="ZapD_sf"/>
</dbReference>
<dbReference type="NCBIfam" id="NF003653">
    <property type="entry name" value="PRK05287.1-1"/>
    <property type="match status" value="1"/>
</dbReference>
<dbReference type="NCBIfam" id="NF003655">
    <property type="entry name" value="PRK05287.1-3"/>
    <property type="match status" value="1"/>
</dbReference>
<dbReference type="PANTHER" id="PTHR39455">
    <property type="entry name" value="CELL DIVISION PROTEIN ZAPD"/>
    <property type="match status" value="1"/>
</dbReference>
<dbReference type="PANTHER" id="PTHR39455:SF1">
    <property type="entry name" value="CELL DIVISION PROTEIN ZAPD"/>
    <property type="match status" value="1"/>
</dbReference>
<dbReference type="Pfam" id="PF07072">
    <property type="entry name" value="ZapD"/>
    <property type="match status" value="1"/>
</dbReference>
<dbReference type="SUPFAM" id="SSF160950">
    <property type="entry name" value="YacF-like"/>
    <property type="match status" value="1"/>
</dbReference>
<name>ZAPD_SALCH</name>
<organism>
    <name type="scientific">Salmonella choleraesuis (strain SC-B67)</name>
    <dbReference type="NCBI Taxonomy" id="321314"/>
    <lineage>
        <taxon>Bacteria</taxon>
        <taxon>Pseudomonadati</taxon>
        <taxon>Pseudomonadota</taxon>
        <taxon>Gammaproteobacteria</taxon>
        <taxon>Enterobacterales</taxon>
        <taxon>Enterobacteriaceae</taxon>
        <taxon>Salmonella</taxon>
    </lineage>
</organism>
<evidence type="ECO:0000255" key="1">
    <source>
        <dbReference type="HAMAP-Rule" id="MF_01092"/>
    </source>
</evidence>
<reference key="1">
    <citation type="journal article" date="2005" name="Nucleic Acids Res.">
        <title>The genome sequence of Salmonella enterica serovar Choleraesuis, a highly invasive and resistant zoonotic pathogen.</title>
        <authorList>
            <person name="Chiu C.-H."/>
            <person name="Tang P."/>
            <person name="Chu C."/>
            <person name="Hu S."/>
            <person name="Bao Q."/>
            <person name="Yu J."/>
            <person name="Chou Y.-Y."/>
            <person name="Wang H.-S."/>
            <person name="Lee Y.-S."/>
        </authorList>
    </citation>
    <scope>NUCLEOTIDE SEQUENCE [LARGE SCALE GENOMIC DNA]</scope>
    <source>
        <strain>SC-B67</strain>
    </source>
</reference>
<keyword id="KW-0131">Cell cycle</keyword>
<keyword id="KW-0132">Cell division</keyword>
<keyword id="KW-0963">Cytoplasm</keyword>
<keyword id="KW-0717">Septation</keyword>
<proteinExistence type="inferred from homology"/>
<comment type="function">
    <text evidence="1">Cell division factor that enhances FtsZ-ring assembly. Directly interacts with FtsZ and promotes bundling of FtsZ protofilaments, with a reduction in FtsZ GTPase activity.</text>
</comment>
<comment type="subunit">
    <text evidence="1">Interacts with FtsZ.</text>
</comment>
<comment type="subcellular location">
    <subcellularLocation>
        <location evidence="1">Cytoplasm</location>
    </subcellularLocation>
    <text evidence="1">Localizes to mid-cell in an FtsZ-dependent manner.</text>
</comment>
<comment type="similarity">
    <text evidence="1">Belongs to the ZapD family.</text>
</comment>
<feature type="chain" id="PRO_1000064919" description="Cell division protein ZapD">
    <location>
        <begin position="1"/>
        <end position="247"/>
    </location>
</feature>
<sequence length="247" mass="28440">MHTQVLFEHPLNEKMRTWLRIEFLIQQLSINLPIADHAGALHFFRNISDLLDVFERGEVRTELLKELERQQRKLQAWVEVPGVDQDRIEALRQQLKSAGSVLISAPRIGQQLREDRLIALVRQRLSIPGGCCSFDLPTLHIWLHLQQAQRDAQIETWLASLNPLTQALTLVLDLIRNSAPFRKQTSLNGFYQDNGDDADLLRLMLTLDSQLYPQISGHKSRFAIRFMPLDSENGLVPERLDFELACC</sequence>
<protein>
    <recommendedName>
        <fullName evidence="1">Cell division protein ZapD</fullName>
    </recommendedName>
    <alternativeName>
        <fullName evidence="1">Z ring-associated protein D</fullName>
    </alternativeName>
</protein>
<accession>Q57TB7</accession>
<gene>
    <name evidence="1" type="primary">zapD</name>
    <name type="ordered locus">SCH_0138</name>
</gene>